<accession>Q6L8H4</accession>
<evidence type="ECO:0000269" key="1">
    <source>
    </source>
</evidence>
<evidence type="ECO:0000305" key="2"/>
<organism>
    <name type="scientific">Homo sapiens</name>
    <name type="common">Human</name>
    <dbReference type="NCBI Taxonomy" id="9606"/>
    <lineage>
        <taxon>Eukaryota</taxon>
        <taxon>Metazoa</taxon>
        <taxon>Chordata</taxon>
        <taxon>Craniata</taxon>
        <taxon>Vertebrata</taxon>
        <taxon>Euteleostomi</taxon>
        <taxon>Mammalia</taxon>
        <taxon>Eutheria</taxon>
        <taxon>Euarchontoglires</taxon>
        <taxon>Primates</taxon>
        <taxon>Haplorrhini</taxon>
        <taxon>Catarrhini</taxon>
        <taxon>Hominidae</taxon>
        <taxon>Homo</taxon>
    </lineage>
</organism>
<keyword id="KW-0416">Keratin</keyword>
<keyword id="KW-1267">Proteomics identification</keyword>
<keyword id="KW-1185">Reference proteome</keyword>
<keyword id="KW-0677">Repeat</keyword>
<comment type="function">
    <text>In the hair cortex, hair keratin intermediate filaments are embedded in an interfilamentous matrix, consisting of hair keratin-associated protein (KRTAP), which are essential for the formation of a rigid and resistant hair shaft through their extensive disulfide bond cross-linking with abundant cysteine residues of hair keratins. The matrix proteins include the high-sulfur and high-glycine-tyrosine keratins.</text>
</comment>
<comment type="subunit">
    <text>Interacts with hair keratins.</text>
</comment>
<comment type="interaction">
    <interactant intactId="EBI-12074540">
        <id>Q6L8H4</id>
    </interactant>
    <interactant intactId="EBI-2212355">
        <id>Q49AN0</id>
        <label>CRY2</label>
    </interactant>
    <organismsDiffer>false</organismsDiffer>
    <experiments>3</experiments>
</comment>
<comment type="interaction">
    <interactant intactId="EBI-12074540">
        <id>Q6L8H4</id>
    </interactant>
    <interactant intactId="EBI-3923092">
        <id>Q9H4G1</id>
        <label>CST9L</label>
    </interactant>
    <organismsDiffer>false</organismsDiffer>
    <experiments>3</experiments>
</comment>
<comment type="interaction">
    <interactant intactId="EBI-12074540">
        <id>Q6L8H4</id>
    </interactant>
    <interactant intactId="EBI-746300">
        <id>Q96LJ7</id>
        <label>DHRS1</label>
    </interactant>
    <organismsDiffer>false</organismsDiffer>
    <experiments>3</experiments>
</comment>
<comment type="interaction">
    <interactant intactId="EBI-12074540">
        <id>Q6L8H4</id>
    </interactant>
    <interactant intactId="EBI-739863">
        <id>Q9BQ66</id>
        <label>KRTAP4-12</label>
    </interactant>
    <organismsDiffer>false</organismsDiffer>
    <experiments>3</experiments>
</comment>
<comment type="interaction">
    <interactant intactId="EBI-12074540">
        <id>Q6L8H4</id>
    </interactant>
    <interactant intactId="EBI-11974251">
        <id>Q6L8H2</id>
        <label>KRTAP5-3</label>
    </interactant>
    <organismsDiffer>false</organismsDiffer>
    <experiments>3</experiments>
</comment>
<comment type="interaction">
    <interactant intactId="EBI-12074540">
        <id>Q6L8H4</id>
    </interactant>
    <interactant intactId="EBI-10250562">
        <id>Q6L8G9</id>
        <label>KRTAP5-6</label>
    </interactant>
    <organismsDiffer>false</organismsDiffer>
    <experiments>3</experiments>
</comment>
<comment type="interaction">
    <interactant intactId="EBI-12074540">
        <id>Q6L8H4</id>
    </interactant>
    <interactant intactId="EBI-3911571">
        <id>Q8N339</id>
        <label>MT1M</label>
    </interactant>
    <organismsDiffer>false</organismsDiffer>
    <experiments>3</experiments>
</comment>
<comment type="interaction">
    <interactant intactId="EBI-12074540">
        <id>Q6L8H4</id>
    </interactant>
    <interactant intactId="EBI-14084211">
        <id>A2BDE7</id>
        <label>PHLDA1</label>
    </interactant>
    <organismsDiffer>false</organismsDiffer>
    <experiments>3</experiments>
</comment>
<comment type="interaction">
    <interactant intactId="EBI-12074540">
        <id>Q6L8H4</id>
    </interactant>
    <interactant intactId="EBI-12767060">
        <id>Q9H3U7</id>
        <label>SMOC2</label>
    </interactant>
    <organismsDiffer>false</organismsDiffer>
    <experiments>3</experiments>
</comment>
<comment type="interaction">
    <interactant intactId="EBI-12074540">
        <id>Q6L8H4</id>
    </interactant>
    <interactant intactId="EBI-14069183">
        <id>Q86XF7</id>
        <label>ZNF575</label>
    </interactant>
    <organismsDiffer>false</organismsDiffer>
    <experiments>3</experiments>
</comment>
<comment type="tissue specificity">
    <text evidence="1">Expressed in hair root but not in skin. Expressed also in lung, pancreas, ovary, testis.</text>
</comment>
<comment type="similarity">
    <text evidence="2">Belongs to the KRTAP type 5 family.</text>
</comment>
<feature type="chain" id="PRO_0000184099" description="Keratin-associated protein 5-1">
    <location>
        <begin position="1"/>
        <end position="278"/>
    </location>
</feature>
<feature type="repeat" description="1">
    <location>
        <begin position="42"/>
        <end position="45"/>
    </location>
</feature>
<feature type="repeat" description="2">
    <location>
        <begin position="48"/>
        <end position="51"/>
    </location>
</feature>
<feature type="repeat" description="3">
    <location>
        <begin position="130"/>
        <end position="133"/>
    </location>
</feature>
<feature type="repeat" description="4">
    <location>
        <begin position="136"/>
        <end position="139"/>
    </location>
</feature>
<feature type="repeat" description="5">
    <location>
        <begin position="142"/>
        <end position="145"/>
    </location>
</feature>
<feature type="repeat" description="6">
    <location>
        <begin position="239"/>
        <end position="242"/>
    </location>
</feature>
<feature type="repeat" description="7">
    <location>
        <begin position="258"/>
        <end position="261"/>
    </location>
</feature>
<feature type="repeat" description="8">
    <location>
        <begin position="268"/>
        <end position="271"/>
    </location>
</feature>
<feature type="region of interest" description="8 X 4 AA repeats of C-C-X-P">
    <location>
        <begin position="42"/>
        <end position="271"/>
    </location>
</feature>
<gene>
    <name type="primary">KRTAP5-1</name>
    <name type="synonym">KAP5.1</name>
    <name type="synonym">KRN1L</name>
    <name type="synonym">KRTAP5.1</name>
</gene>
<sequence>MGCCGCSGGCGSSCGGCGSGCGGCGSGCGGCGSGCGGSGSSCCVPVCCCKPVCCRVPTCSCSSCGKGGCGSSGGSKGGCGSCGGCKGGCGSCGGSKGGCGSCGGSKGGCGSCGGSKGGCGSGCGGCGSSCCVPVCCCKPMCCCVPACSCSSCGKGGCGSCGCSKGACGSCGGSKGGCGSCGGCKGGCGSCGGSKGGCGSGCGGCGSGCGVPVCCCSCSSCGSCAGSKGGCGSSCSQCSCCKPCCCSSGCGSSCCQSSCCKPCCSQSSCCVPVCCQCKI</sequence>
<reference key="1">
    <citation type="journal article" date="2004" name="Biochem. Biophys. Res. Commun.">
        <title>Identification of two novel clusters of ultrahigh-sulfur keratin-associated protein genes on human chromosome 11.</title>
        <authorList>
            <person name="Yahagi S."/>
            <person name="Shibuya K."/>
            <person name="Obayashi I."/>
            <person name="Masaki H."/>
            <person name="Kurata Y."/>
            <person name="Kudoh J."/>
            <person name="Shimizu N."/>
        </authorList>
    </citation>
    <scope>NUCLEOTIDE SEQUENCE [MRNA]</scope>
    <scope>TISSUE SPECIFICITY</scope>
    <source>
        <tissue>Hair root</tissue>
    </source>
</reference>
<protein>
    <recommendedName>
        <fullName>Keratin-associated protein 5-1</fullName>
    </recommendedName>
    <alternativeName>
        <fullName>Keratin, cuticle, ultrahigh sulphur 1-like</fullName>
    </alternativeName>
    <alternativeName>
        <fullName>Keratin-associated protein 5.1</fullName>
    </alternativeName>
    <alternativeName>
        <fullName>Ultrahigh sulfur keratin-associated protein 5.1</fullName>
    </alternativeName>
</protein>
<proteinExistence type="evidence at protein level"/>
<name>KRA51_HUMAN</name>
<dbReference type="EMBL" id="AB126070">
    <property type="protein sequence ID" value="BAD20197.1"/>
    <property type="molecule type" value="mRNA"/>
</dbReference>
<dbReference type="CCDS" id="CCDS31330.1"/>
<dbReference type="RefSeq" id="NP_001005922.1">
    <property type="nucleotide sequence ID" value="NM_001005922.1"/>
</dbReference>
<dbReference type="BioGRID" id="132266">
    <property type="interactions" value="12"/>
</dbReference>
<dbReference type="FunCoup" id="Q6L8H4">
    <property type="interactions" value="8"/>
</dbReference>
<dbReference type="IntAct" id="Q6L8H4">
    <property type="interactions" value="10"/>
</dbReference>
<dbReference type="STRING" id="9606.ENSP00000371606"/>
<dbReference type="iPTMnet" id="Q6L8H4"/>
<dbReference type="PhosphoSitePlus" id="Q6L8H4"/>
<dbReference type="BioMuta" id="KRTAP5-1"/>
<dbReference type="MassIVE" id="Q6L8H4"/>
<dbReference type="PaxDb" id="9606-ENSP00000371606"/>
<dbReference type="PeptideAtlas" id="Q6L8H4"/>
<dbReference type="ProteomicsDB" id="66554"/>
<dbReference type="Antibodypedia" id="81788">
    <property type="antibodies" value="1 antibodies from 1 providers"/>
</dbReference>
<dbReference type="DNASU" id="387264"/>
<dbReference type="Ensembl" id="ENST00000382171.2">
    <property type="protein sequence ID" value="ENSP00000371606.2"/>
    <property type="gene ID" value="ENSG00000205869.2"/>
</dbReference>
<dbReference type="Ensembl" id="ENST00000619083.1">
    <property type="protein sequence ID" value="ENSP00000481419.1"/>
    <property type="gene ID" value="ENSG00000278210.1"/>
</dbReference>
<dbReference type="Ensembl" id="ENST00000625554.1">
    <property type="protein sequence ID" value="ENSP00000486084.1"/>
    <property type="gene ID" value="ENSG00000280585.1"/>
</dbReference>
<dbReference type="Ensembl" id="ENST00000707558.1">
    <property type="protein sequence ID" value="ENSP00000516911.1"/>
    <property type="gene ID" value="ENSG00000291433.1"/>
</dbReference>
<dbReference type="GeneID" id="387264"/>
<dbReference type="KEGG" id="hsa:387264"/>
<dbReference type="MANE-Select" id="ENST00000382171.2">
    <property type="protein sequence ID" value="ENSP00000371606.2"/>
    <property type="RefSeq nucleotide sequence ID" value="NM_001005922.1"/>
    <property type="RefSeq protein sequence ID" value="NP_001005922.1"/>
</dbReference>
<dbReference type="UCSC" id="uc001ltu.1">
    <property type="organism name" value="human"/>
</dbReference>
<dbReference type="AGR" id="HGNC:23596"/>
<dbReference type="CTD" id="387264"/>
<dbReference type="GeneCards" id="KRTAP5-1"/>
<dbReference type="HGNC" id="HGNC:23596">
    <property type="gene designation" value="KRTAP5-1"/>
</dbReference>
<dbReference type="HPA" id="ENSG00000205869">
    <property type="expression patterns" value="Tissue enhanced (brain, pituitary gland)"/>
</dbReference>
<dbReference type="MIM" id="148022">
    <property type="type" value="gene"/>
</dbReference>
<dbReference type="neXtProt" id="NX_Q6L8H4"/>
<dbReference type="OpenTargets" id="ENSG00000205869"/>
<dbReference type="PharmGKB" id="PA134874098"/>
<dbReference type="VEuPathDB" id="HostDB:ENSG00000205869"/>
<dbReference type="GeneTree" id="ENSGT00950000186553"/>
<dbReference type="HOGENOM" id="CLU_097966_0_0_1"/>
<dbReference type="InParanoid" id="Q6L8H4"/>
<dbReference type="OMA" id="NYNCIGY"/>
<dbReference type="PAN-GO" id="Q6L8H4">
    <property type="GO annotations" value="0 GO annotations based on evolutionary models"/>
</dbReference>
<dbReference type="PathwayCommons" id="Q6L8H4"/>
<dbReference type="Reactome" id="R-HSA-6805567">
    <property type="pathway name" value="Keratinization"/>
</dbReference>
<dbReference type="SignaLink" id="Q6L8H4"/>
<dbReference type="BioGRID-ORCS" id="387264">
    <property type="hits" value="212 hits in 1135 CRISPR screens"/>
</dbReference>
<dbReference type="GenomeRNAi" id="387264"/>
<dbReference type="Pharos" id="Q6L8H4">
    <property type="development level" value="Tdark"/>
</dbReference>
<dbReference type="PRO" id="PR:Q6L8H4"/>
<dbReference type="Proteomes" id="UP000005640">
    <property type="component" value="Chromosome 11"/>
</dbReference>
<dbReference type="RNAct" id="Q6L8H4">
    <property type="molecule type" value="protein"/>
</dbReference>
<dbReference type="Bgee" id="ENSG00000205869">
    <property type="expression patterns" value="Expressed in cerebellar hemisphere and 88 other cell types or tissues"/>
</dbReference>
<dbReference type="GO" id="GO:0005829">
    <property type="term" value="C:cytosol"/>
    <property type="evidence" value="ECO:0000304"/>
    <property type="project" value="Reactome"/>
</dbReference>
<dbReference type="GO" id="GO:0005882">
    <property type="term" value="C:intermediate filament"/>
    <property type="evidence" value="ECO:0007669"/>
    <property type="project" value="UniProtKB-KW"/>
</dbReference>